<accession>P46947</accession>
<accession>D6VTX8</accession>
<reference key="1">
    <citation type="journal article" date="1995" name="Yeast">
        <title>The sequence of an 11.1 kb fragment on the left arm of Saccharomyces cerevisiae chromosome VII reveals six open reading frames including NSP49, KEM1 and four putative new genes.</title>
        <authorList>
            <person name="Bertani I."/>
            <person name="Coglievina M."/>
            <person name="Zaccaria P."/>
            <person name="Klima R."/>
            <person name="Bruschi C.V."/>
        </authorList>
    </citation>
    <scope>NUCLEOTIDE SEQUENCE [GENOMIC DNA]</scope>
    <source>
        <strain>ATCC 96604 / S288c / FY1679</strain>
    </source>
</reference>
<reference key="2">
    <citation type="journal article" date="1997" name="Nature">
        <title>The nucleotide sequence of Saccharomyces cerevisiae chromosome VII.</title>
        <authorList>
            <person name="Tettelin H."/>
            <person name="Agostoni-Carbone M.L."/>
            <person name="Albermann K."/>
            <person name="Albers M."/>
            <person name="Arroyo J."/>
            <person name="Backes U."/>
            <person name="Barreiros T."/>
            <person name="Bertani I."/>
            <person name="Bjourson A.J."/>
            <person name="Brueckner M."/>
            <person name="Bruschi C.V."/>
            <person name="Carignani G."/>
            <person name="Castagnoli L."/>
            <person name="Cerdan E."/>
            <person name="Clemente M.L."/>
            <person name="Coblenz A."/>
            <person name="Coglievina M."/>
            <person name="Coissac E."/>
            <person name="Defoor E."/>
            <person name="Del Bino S."/>
            <person name="Delius H."/>
            <person name="Delneri D."/>
            <person name="de Wergifosse P."/>
            <person name="Dujon B."/>
            <person name="Durand P."/>
            <person name="Entian K.-D."/>
            <person name="Eraso P."/>
            <person name="Escribano V."/>
            <person name="Fabiani L."/>
            <person name="Fartmann B."/>
            <person name="Feroli F."/>
            <person name="Feuermann M."/>
            <person name="Frontali L."/>
            <person name="Garcia-Gonzalez M."/>
            <person name="Garcia-Saez M.I."/>
            <person name="Goffeau A."/>
            <person name="Guerreiro P."/>
            <person name="Hani J."/>
            <person name="Hansen M."/>
            <person name="Hebling U."/>
            <person name="Hernandez K."/>
            <person name="Heumann K."/>
            <person name="Hilger F."/>
            <person name="Hofmann B."/>
            <person name="Indge K.J."/>
            <person name="James C.M."/>
            <person name="Klima R."/>
            <person name="Koetter P."/>
            <person name="Kramer B."/>
            <person name="Kramer W."/>
            <person name="Lauquin G."/>
            <person name="Leuther H."/>
            <person name="Louis E.J."/>
            <person name="Maillier E."/>
            <person name="Marconi A."/>
            <person name="Martegani E."/>
            <person name="Mazon M.J."/>
            <person name="Mazzoni C."/>
            <person name="McReynolds A.D.K."/>
            <person name="Melchioretto P."/>
            <person name="Mewes H.-W."/>
            <person name="Minenkova O."/>
            <person name="Mueller-Auer S."/>
            <person name="Nawrocki A."/>
            <person name="Netter P."/>
            <person name="Neu R."/>
            <person name="Nombela C."/>
            <person name="Oliver S.G."/>
            <person name="Panzeri L."/>
            <person name="Paoluzi S."/>
            <person name="Plevani P."/>
            <person name="Portetelle D."/>
            <person name="Portillo F."/>
            <person name="Potier S."/>
            <person name="Purnelle B."/>
            <person name="Rieger M."/>
            <person name="Riles L."/>
            <person name="Rinaldi T."/>
            <person name="Robben J."/>
            <person name="Rodrigues-Pousada C."/>
            <person name="Rodriguez-Belmonte E."/>
            <person name="Rodriguez-Torres A.M."/>
            <person name="Rose M."/>
            <person name="Ruzzi M."/>
            <person name="Saliola M."/>
            <person name="Sanchez-Perez M."/>
            <person name="Schaefer B."/>
            <person name="Schaefer M."/>
            <person name="Scharfe M."/>
            <person name="Schmidheini T."/>
            <person name="Schreer A."/>
            <person name="Skala J."/>
            <person name="Souciet J.-L."/>
            <person name="Steensma H.Y."/>
            <person name="Talla E."/>
            <person name="Thierry A."/>
            <person name="Vandenbol M."/>
            <person name="van der Aart Q.J.M."/>
            <person name="Van Dyck L."/>
            <person name="Vanoni M."/>
            <person name="Verhasselt P."/>
            <person name="Voet M."/>
            <person name="Volckaert G."/>
            <person name="Wambutt R."/>
            <person name="Watson M.D."/>
            <person name="Weber N."/>
            <person name="Wedler E."/>
            <person name="Wedler H."/>
            <person name="Wipfli P."/>
            <person name="Wolf K."/>
            <person name="Wright L.F."/>
            <person name="Zaccaria P."/>
            <person name="Zimmermann M."/>
            <person name="Zollner A."/>
            <person name="Kleine K."/>
        </authorList>
    </citation>
    <scope>NUCLEOTIDE SEQUENCE [LARGE SCALE GENOMIC DNA]</scope>
    <source>
        <strain>ATCC 204508 / S288c</strain>
    </source>
</reference>
<reference key="3">
    <citation type="journal article" date="2014" name="G3 (Bethesda)">
        <title>The reference genome sequence of Saccharomyces cerevisiae: Then and now.</title>
        <authorList>
            <person name="Engel S.R."/>
            <person name="Dietrich F.S."/>
            <person name="Fisk D.G."/>
            <person name="Binkley G."/>
            <person name="Balakrishnan R."/>
            <person name="Costanzo M.C."/>
            <person name="Dwight S.S."/>
            <person name="Hitz B.C."/>
            <person name="Karra K."/>
            <person name="Nash R.S."/>
            <person name="Weng S."/>
            <person name="Wong E.D."/>
            <person name="Lloyd P."/>
            <person name="Skrzypek M.S."/>
            <person name="Miyasato S.R."/>
            <person name="Simison M."/>
            <person name="Cherry J.M."/>
        </authorList>
    </citation>
    <scope>GENOME REANNOTATION</scope>
    <source>
        <strain>ATCC 204508 / S288c</strain>
    </source>
</reference>
<reference key="4">
    <citation type="journal article" date="2007" name="Genome Res.">
        <title>Approaching a complete repository of sequence-verified protein-encoding clones for Saccharomyces cerevisiae.</title>
        <authorList>
            <person name="Hu Y."/>
            <person name="Rolfs A."/>
            <person name="Bhullar B."/>
            <person name="Murthy T.V.S."/>
            <person name="Zhu C."/>
            <person name="Berger M.F."/>
            <person name="Camargo A.A."/>
            <person name="Kelley F."/>
            <person name="McCarron S."/>
            <person name="Jepson D."/>
            <person name="Richardson A."/>
            <person name="Raphael J."/>
            <person name="Moreira D."/>
            <person name="Taycher E."/>
            <person name="Zuo D."/>
            <person name="Mohr S."/>
            <person name="Kane M.F."/>
            <person name="Williamson J."/>
            <person name="Simpson A.J.G."/>
            <person name="Bulyk M.L."/>
            <person name="Harlow E."/>
            <person name="Marsischky G."/>
            <person name="Kolodner R.D."/>
            <person name="LaBaer J."/>
        </authorList>
    </citation>
    <scope>NUCLEOTIDE SEQUENCE [GENOMIC DNA]</scope>
    <source>
        <strain>ATCC 204508 / S288c</strain>
    </source>
</reference>
<reference key="5">
    <citation type="journal article" date="1996" name="Mol. Cell. Biol.">
        <title>Genetic analysis of the bipolar pattern of bud site selection in the yeast Saccharomyces cerevisiae.</title>
        <authorList>
            <person name="Zahner J.E."/>
            <person name="Harkins H.A."/>
            <person name="Pringle J.R."/>
        </authorList>
    </citation>
    <scope>FUNCTION</scope>
</reference>
<reference key="6">
    <citation type="journal article" date="2001" name="Mol. Biol. Cell">
        <title>A genomic study of the bipolar bud site selection pattern in Saccharomyces cerevisiae.</title>
        <authorList>
            <person name="Ni L."/>
            <person name="Snyder M."/>
        </authorList>
    </citation>
    <scope>FUNCTION</scope>
    <scope>SUBCELLULAR LOCATION</scope>
</reference>
<reference key="7">
    <citation type="journal article" date="2002" name="Mol. Cell. Biol.">
        <title>Proteomics analysis reveals stable multiprotein complexes in both fission and budding yeasts containing Myb-related Cdc5p/Cef1p, novel pre-mRNA splicing factors, and snRNAs.</title>
        <authorList>
            <person name="Ohi M.D."/>
            <person name="Link A.J."/>
            <person name="Ren L."/>
            <person name="Jennings J.L."/>
            <person name="McDonald W.H."/>
            <person name="Gould K.L."/>
        </authorList>
    </citation>
    <scope>IDENTIFICATION IN THE CWC COMPLEX</scope>
    <scope>IDENTIFICATION BY MASS SPECTROMETRY</scope>
</reference>
<reference key="8">
    <citation type="journal article" date="2003" name="Genetics">
        <title>Genetic interactions with CLF1 identify additional pre-mRNA splicing factors and a link between activators of yeast vesicular transport and splicing.</title>
        <authorList>
            <person name="Vincent K."/>
            <person name="Wang Q."/>
            <person name="Jay S."/>
            <person name="Hobbs K."/>
            <person name="Rymond B.C."/>
        </authorList>
    </citation>
    <scope>FUNCTION</scope>
</reference>
<reference key="9">
    <citation type="journal article" date="2003" name="Nature">
        <title>Global analysis of protein localization in budding yeast.</title>
        <authorList>
            <person name="Huh W.-K."/>
            <person name="Falvo J.V."/>
            <person name="Gerke L.C."/>
            <person name="Carroll A.S."/>
            <person name="Howson R.W."/>
            <person name="Weissman J.S."/>
            <person name="O'Shea E.K."/>
        </authorList>
    </citation>
    <scope>SUBCELLULAR LOCATION [LARGE SCALE ANALYSIS]</scope>
</reference>
<reference key="10">
    <citation type="journal article" date="2004" name="EMBO J.">
        <title>Proteomic analysis identifies a new complex required for nuclear pre-mRNA retention and splicing.</title>
        <authorList>
            <person name="Dziembowski A."/>
            <person name="Ventura A.-P."/>
            <person name="Rutz B."/>
            <person name="Caspary F."/>
            <person name="Faux C."/>
            <person name="Halgand F."/>
            <person name="Laprevote O."/>
            <person name="Seraphin B."/>
        </authorList>
    </citation>
    <scope>FUNCTION</scope>
    <scope>IDENTIFICATION BY MASS SPECTROMETRY</scope>
    <scope>INTERACTION WITH IST3 AND PML1</scope>
</reference>
<name>CWC26_YEAST</name>
<gene>
    <name type="primary">BUD13</name>
    <name type="synonym">CWC26</name>
    <name type="synonym">SLC7</name>
    <name type="ordered locus">YGL174W</name>
    <name type="ORF">G1642</name>
</gene>
<dbReference type="EMBL" id="X84705">
    <property type="protein sequence ID" value="CAA59179.1"/>
    <property type="molecule type" value="Genomic_DNA"/>
</dbReference>
<dbReference type="EMBL" id="Z72696">
    <property type="protein sequence ID" value="CAA96886.1"/>
    <property type="molecule type" value="Genomic_DNA"/>
</dbReference>
<dbReference type="EMBL" id="AY558504">
    <property type="protein sequence ID" value="AAS56830.1"/>
    <property type="molecule type" value="Genomic_DNA"/>
</dbReference>
<dbReference type="EMBL" id="BK006941">
    <property type="protein sequence ID" value="DAA07939.1"/>
    <property type="molecule type" value="Genomic_DNA"/>
</dbReference>
<dbReference type="PIR" id="S59237">
    <property type="entry name" value="S59237"/>
</dbReference>
<dbReference type="RefSeq" id="NP_011341.3">
    <property type="nucleotide sequence ID" value="NM_001181039.3"/>
</dbReference>
<dbReference type="PDB" id="2MKC">
    <property type="method" value="NMR"/>
    <property type="chains" value="C=215-245"/>
</dbReference>
<dbReference type="PDB" id="2MY2">
    <property type="method" value="NMR"/>
    <property type="chains" value="B=215-255"/>
</dbReference>
<dbReference type="PDB" id="4UQT">
    <property type="method" value="NMR"/>
    <property type="chains" value="B=222-256"/>
</dbReference>
<dbReference type="PDB" id="5GM6">
    <property type="method" value="EM"/>
    <property type="resolution" value="3.50 A"/>
    <property type="chains" value="W=1-266"/>
</dbReference>
<dbReference type="PDB" id="5LQW">
    <property type="method" value="EM"/>
    <property type="resolution" value="5.80 A"/>
    <property type="chains" value="L=1-266"/>
</dbReference>
<dbReference type="PDB" id="5ZWM">
    <property type="method" value="EM"/>
    <property type="resolution" value="3.40 A"/>
    <property type="chains" value="Y=1-266"/>
</dbReference>
<dbReference type="PDB" id="5ZWO">
    <property type="method" value="EM"/>
    <property type="resolution" value="3.90 A"/>
    <property type="chains" value="Y=1-266"/>
</dbReference>
<dbReference type="PDBsum" id="2MKC"/>
<dbReference type="PDBsum" id="2MY2"/>
<dbReference type="PDBsum" id="4UQT"/>
<dbReference type="PDBsum" id="5GM6"/>
<dbReference type="PDBsum" id="5LQW"/>
<dbReference type="PDBsum" id="5ZWM"/>
<dbReference type="PDBsum" id="5ZWO"/>
<dbReference type="BMRB" id="P46947"/>
<dbReference type="EMDB" id="EMD-6972"/>
<dbReference type="EMDB" id="EMD-6974"/>
<dbReference type="EMDB" id="EMD-9524"/>
<dbReference type="SMR" id="P46947"/>
<dbReference type="BioGRID" id="33079">
    <property type="interactions" value="396"/>
</dbReference>
<dbReference type="ComplexPortal" id="CPX-1649">
    <property type="entry name" value="RES complex"/>
</dbReference>
<dbReference type="ComplexPortal" id="CPX-1651">
    <property type="entry name" value="PRP19-associated complex"/>
</dbReference>
<dbReference type="ComplexPortal" id="CPX-26">
    <property type="entry name" value="U2 small nuclear ribonucleoprotein complex"/>
</dbReference>
<dbReference type="DIP" id="DIP-2075N"/>
<dbReference type="FunCoup" id="P46947">
    <property type="interactions" value="101"/>
</dbReference>
<dbReference type="IntAct" id="P46947">
    <property type="interactions" value="36"/>
</dbReference>
<dbReference type="MINT" id="P46947"/>
<dbReference type="STRING" id="4932.YGL174W"/>
<dbReference type="iPTMnet" id="P46947"/>
<dbReference type="PaxDb" id="4932-YGL174W"/>
<dbReference type="PeptideAtlas" id="P46947"/>
<dbReference type="EnsemblFungi" id="YGL174W_mRNA">
    <property type="protein sequence ID" value="YGL174W"/>
    <property type="gene ID" value="YGL174W"/>
</dbReference>
<dbReference type="GeneID" id="852701"/>
<dbReference type="KEGG" id="sce:YGL174W"/>
<dbReference type="AGR" id="SGD:S000003142"/>
<dbReference type="SGD" id="S000003142">
    <property type="gene designation" value="BUD13"/>
</dbReference>
<dbReference type="VEuPathDB" id="FungiDB:YGL174W"/>
<dbReference type="eggNOG" id="KOG2654">
    <property type="taxonomic scope" value="Eukaryota"/>
</dbReference>
<dbReference type="GeneTree" id="ENSGT00390000014500"/>
<dbReference type="HOGENOM" id="CLU_086127_0_0_1"/>
<dbReference type="InParanoid" id="P46947"/>
<dbReference type="OMA" id="NGFENRW"/>
<dbReference type="OrthoDB" id="6022at2759"/>
<dbReference type="BioCyc" id="YEAST:G3O-30662-MONOMER"/>
<dbReference type="BioGRID-ORCS" id="852701">
    <property type="hits" value="5 hits in 10 CRISPR screens"/>
</dbReference>
<dbReference type="EvolutionaryTrace" id="P46947"/>
<dbReference type="PRO" id="PR:P46947"/>
<dbReference type="Proteomes" id="UP000002311">
    <property type="component" value="Chromosome VII"/>
</dbReference>
<dbReference type="RNAct" id="P46947">
    <property type="molecule type" value="protein"/>
</dbReference>
<dbReference type="GO" id="GO:0005737">
    <property type="term" value="C:cytoplasm"/>
    <property type="evidence" value="ECO:0007669"/>
    <property type="project" value="UniProtKB-SubCell"/>
</dbReference>
<dbReference type="GO" id="GO:0005634">
    <property type="term" value="C:nucleus"/>
    <property type="evidence" value="ECO:0000314"/>
    <property type="project" value="SGD"/>
</dbReference>
<dbReference type="GO" id="GO:0000974">
    <property type="term" value="C:Prp19 complex"/>
    <property type="evidence" value="ECO:0000353"/>
    <property type="project" value="ComplexPortal"/>
</dbReference>
<dbReference type="GO" id="GO:0070274">
    <property type="term" value="C:RES complex"/>
    <property type="evidence" value="ECO:0000314"/>
    <property type="project" value="SGD"/>
</dbReference>
<dbReference type="GO" id="GO:0005681">
    <property type="term" value="C:spliceosomal complex"/>
    <property type="evidence" value="ECO:0000303"/>
    <property type="project" value="ComplexPortal"/>
</dbReference>
<dbReference type="GO" id="GO:0005686">
    <property type="term" value="C:U2 snRNP"/>
    <property type="evidence" value="ECO:0000303"/>
    <property type="project" value="ComplexPortal"/>
</dbReference>
<dbReference type="GO" id="GO:0051237">
    <property type="term" value="P:maintenance of RNA location"/>
    <property type="evidence" value="ECO:0000315"/>
    <property type="project" value="ComplexPortal"/>
</dbReference>
<dbReference type="GO" id="GO:0000398">
    <property type="term" value="P:mRNA splicing, via spliceosome"/>
    <property type="evidence" value="ECO:0000314"/>
    <property type="project" value="SGD"/>
</dbReference>
<dbReference type="GO" id="GO:1903241">
    <property type="term" value="P:U2-type prespliceosome assembly"/>
    <property type="evidence" value="ECO:0000303"/>
    <property type="project" value="ComplexPortal"/>
</dbReference>
<dbReference type="InterPro" id="IPR018609">
    <property type="entry name" value="Bud13"/>
</dbReference>
<dbReference type="InterPro" id="IPR051112">
    <property type="entry name" value="CWC26_splicing_factor"/>
</dbReference>
<dbReference type="PANTHER" id="PTHR31809">
    <property type="entry name" value="BUD13 HOMOLOG"/>
    <property type="match status" value="1"/>
</dbReference>
<dbReference type="PANTHER" id="PTHR31809:SF0">
    <property type="entry name" value="BUD13 HOMOLOG"/>
    <property type="match status" value="1"/>
</dbReference>
<dbReference type="Pfam" id="PF09736">
    <property type="entry name" value="Bud13"/>
    <property type="match status" value="1"/>
</dbReference>
<evidence type="ECO:0000256" key="1">
    <source>
        <dbReference type="SAM" id="MobiDB-lite"/>
    </source>
</evidence>
<evidence type="ECO:0000269" key="2">
    <source>
    </source>
</evidence>
<evidence type="ECO:0000269" key="3">
    <source>
    </source>
</evidence>
<evidence type="ECO:0000269" key="4">
    <source>
    </source>
</evidence>
<evidence type="ECO:0000269" key="5">
    <source>
    </source>
</evidence>
<evidence type="ECO:0000269" key="6">
    <source>
    </source>
</evidence>
<evidence type="ECO:0000305" key="7"/>
<evidence type="ECO:0007829" key="8">
    <source>
        <dbReference type="PDB" id="2MY2"/>
    </source>
</evidence>
<evidence type="ECO:0007829" key="9">
    <source>
        <dbReference type="PDB" id="4UQT"/>
    </source>
</evidence>
<proteinExistence type="evidence at protein level"/>
<protein>
    <recommendedName>
        <fullName>Pre-mRNA-splicing factor CWC26</fullName>
    </recommendedName>
    <alternativeName>
        <fullName>Bud site selection protein 13</fullName>
    </alternativeName>
    <alternativeName>
        <fullName>Complexed with CEF1 protein 26</fullName>
    </alternativeName>
    <alternativeName>
        <fullName>Synthetic lethal with CLF1 protein 7</fullName>
    </alternativeName>
</protein>
<organism>
    <name type="scientific">Saccharomyces cerevisiae (strain ATCC 204508 / S288c)</name>
    <name type="common">Baker's yeast</name>
    <dbReference type="NCBI Taxonomy" id="559292"/>
    <lineage>
        <taxon>Eukaryota</taxon>
        <taxon>Fungi</taxon>
        <taxon>Dikarya</taxon>
        <taxon>Ascomycota</taxon>
        <taxon>Saccharomycotina</taxon>
        <taxon>Saccharomycetes</taxon>
        <taxon>Saccharomycetales</taxon>
        <taxon>Saccharomycetaceae</taxon>
        <taxon>Saccharomyces</taxon>
    </lineage>
</organism>
<sequence>MALHQYLSETYGPTKPKNKTKKKKKESKSDANSDKTSLIVKERLSTLQQEQEKSGVASFSKFDKQKSKNIWKNLETNELSHAITHPSASSITGNESKNDLKEIRAQEPLVTVADKSKTRKTIYRDAQGHKIQEDSKIDDSSFSRSKYEDEKAAEREQYLKNLNMGDVQKLGINVDAHDKKKNQTASSLTIEDPAITFTHDKERTVKTSLLGRKLYDKPAPENRFAIMPGSRWDGVHRSNGFEEKWFAKQNEINEKKVQSYTLQEDY</sequence>
<keyword id="KW-0002">3D-structure</keyword>
<keyword id="KW-0963">Cytoplasm</keyword>
<keyword id="KW-0507">mRNA processing</keyword>
<keyword id="KW-0508">mRNA splicing</keyword>
<keyword id="KW-0539">Nucleus</keyword>
<keyword id="KW-1185">Reference proteome</keyword>
<keyword id="KW-0747">Spliceosome</keyword>
<comment type="function">
    <text evidence="2 4 5 6">Required for efficient splicing and pre-mRNA nuclear retention. May also be involved in positioning the proximal bud pole signal.</text>
</comment>
<comment type="subunit">
    <text evidence="3 5">Belongs to the pre-mRNA retention and splicing (RES) complex composed of at least BUD13, IST3 and PML1. May also belong to the CWC complex (or CEF1-associated complex) composed of the U2, U5 and U6 snRNAs and at least BUD13, BUD31, BRR2, CDC40, CEF1, CLF1, CUS1, CWC2, CWC15, CWC21, CWC22, CWC23, CWC24, CWC25, CWC27, ECM2, HSH155, IST3, ISY1, LEA1, MSL1, NTC20, PRP8, PRP9, PRP11, PRP19, PRP21, PRP22, PRP45, PRP46, SLU7, SMB1, SMD1, SMD2, SMD3, SMX2, SMX3, SNT309, SNU114, SPP2, SYF1, SYF2, RSE1 and YJU2. Interacts with IST3 and PML1.</text>
</comment>
<comment type="interaction">
    <interactant intactId="EBI-24073">
        <id>P46947</id>
    </interactant>
    <interactant intactId="EBI-664">
        <id>P49955</id>
        <label>HSH155</label>
    </interactant>
    <organismsDiffer>false</organismsDiffer>
    <experiments>3</experiments>
</comment>
<comment type="interaction">
    <interactant intactId="EBI-24073">
        <id>P46947</id>
    </interactant>
    <interactant intactId="EBI-25387">
        <id>P40565</id>
        <label>IST3</label>
    </interactant>
    <organismsDiffer>false</organismsDiffer>
    <experiments>14</experiments>
</comment>
<comment type="subcellular location">
    <subcellularLocation>
        <location>Cytoplasm</location>
    </subcellularLocation>
    <subcellularLocation>
        <location>Nucleus</location>
    </subcellularLocation>
</comment>
<comment type="similarity">
    <text evidence="7">Belongs to the CWC26 family.</text>
</comment>
<feature type="chain" id="PRO_0000079610" description="Pre-mRNA-splicing factor CWC26">
    <location>
        <begin position="1"/>
        <end position="266"/>
    </location>
</feature>
<feature type="region of interest" description="Disordered" evidence="1">
    <location>
        <begin position="1"/>
        <end position="37"/>
    </location>
</feature>
<feature type="region of interest" description="Disordered" evidence="1">
    <location>
        <begin position="118"/>
        <end position="149"/>
    </location>
</feature>
<feature type="compositionally biased region" description="Basic residues" evidence="1">
    <location>
        <begin position="16"/>
        <end position="26"/>
    </location>
</feature>
<feature type="compositionally biased region" description="Basic and acidic residues" evidence="1">
    <location>
        <begin position="122"/>
        <end position="149"/>
    </location>
</feature>
<feature type="helix" evidence="8">
    <location>
        <begin position="230"/>
        <end position="232"/>
    </location>
</feature>
<feature type="helix" evidence="8">
    <location>
        <begin position="243"/>
        <end position="250"/>
    </location>
</feature>
<feature type="strand" evidence="9">
    <location>
        <begin position="252"/>
        <end position="254"/>
    </location>
</feature>